<proteinExistence type="evidence at protein level"/>
<feature type="signal peptide" evidence="5">
    <location>
        <begin position="1"/>
        <end position="16"/>
    </location>
</feature>
<feature type="chain" id="PRO_0000418554" description="Acidic phospholipase A2 Cvv-E6b">
    <location>
        <begin position="17"/>
        <end position="138"/>
    </location>
</feature>
<feature type="active site" evidence="2">
    <location>
        <position position="63"/>
    </location>
</feature>
<feature type="active site" evidence="2">
    <location>
        <position position="105"/>
    </location>
</feature>
<feature type="binding site" evidence="1">
    <location>
        <position position="43"/>
    </location>
    <ligand>
        <name>Ca(2+)</name>
        <dbReference type="ChEBI" id="CHEBI:29108"/>
    </ligand>
</feature>
<feature type="binding site" evidence="1">
    <location>
        <position position="45"/>
    </location>
    <ligand>
        <name>Ca(2+)</name>
        <dbReference type="ChEBI" id="CHEBI:29108"/>
    </ligand>
</feature>
<feature type="binding site" evidence="1">
    <location>
        <position position="47"/>
    </location>
    <ligand>
        <name>Ca(2+)</name>
        <dbReference type="ChEBI" id="CHEBI:29108"/>
    </ligand>
</feature>
<feature type="binding site" evidence="1">
    <location>
        <position position="64"/>
    </location>
    <ligand>
        <name>Ca(2+)</name>
        <dbReference type="ChEBI" id="CHEBI:29108"/>
    </ligand>
</feature>
<feature type="disulfide bond" evidence="1">
    <location>
        <begin position="42"/>
        <end position="131"/>
    </location>
</feature>
<feature type="disulfide bond" evidence="1">
    <location>
        <begin position="44"/>
        <end position="60"/>
    </location>
</feature>
<feature type="disulfide bond" evidence="1">
    <location>
        <begin position="59"/>
        <end position="111"/>
    </location>
</feature>
<feature type="disulfide bond" evidence="1">
    <location>
        <begin position="65"/>
        <end position="138"/>
    </location>
</feature>
<feature type="disulfide bond" evidence="1">
    <location>
        <begin position="66"/>
        <end position="104"/>
    </location>
</feature>
<feature type="disulfide bond" evidence="1">
    <location>
        <begin position="73"/>
        <end position="97"/>
    </location>
</feature>
<feature type="disulfide bond" evidence="1">
    <location>
        <begin position="91"/>
        <end position="102"/>
    </location>
</feature>
<dbReference type="EC" id="3.1.1.4"/>
<dbReference type="EMBL" id="AY120877">
    <property type="protein sequence ID" value="AAM80565.1"/>
    <property type="molecule type" value="mRNA"/>
</dbReference>
<dbReference type="SMR" id="Q7ZTA6"/>
<dbReference type="GO" id="GO:0005576">
    <property type="term" value="C:extracellular region"/>
    <property type="evidence" value="ECO:0007669"/>
    <property type="project" value="UniProtKB-SubCell"/>
</dbReference>
<dbReference type="GO" id="GO:0005509">
    <property type="term" value="F:calcium ion binding"/>
    <property type="evidence" value="ECO:0007669"/>
    <property type="project" value="InterPro"/>
</dbReference>
<dbReference type="GO" id="GO:0047498">
    <property type="term" value="F:calcium-dependent phospholipase A2 activity"/>
    <property type="evidence" value="ECO:0007669"/>
    <property type="project" value="TreeGrafter"/>
</dbReference>
<dbReference type="GO" id="GO:0005543">
    <property type="term" value="F:phospholipid binding"/>
    <property type="evidence" value="ECO:0007669"/>
    <property type="project" value="TreeGrafter"/>
</dbReference>
<dbReference type="GO" id="GO:0090729">
    <property type="term" value="F:toxin activity"/>
    <property type="evidence" value="ECO:0007669"/>
    <property type="project" value="UniProtKB-KW"/>
</dbReference>
<dbReference type="GO" id="GO:0050482">
    <property type="term" value="P:arachidonate secretion"/>
    <property type="evidence" value="ECO:0007669"/>
    <property type="project" value="InterPro"/>
</dbReference>
<dbReference type="GO" id="GO:0016042">
    <property type="term" value="P:lipid catabolic process"/>
    <property type="evidence" value="ECO:0007669"/>
    <property type="project" value="UniProtKB-KW"/>
</dbReference>
<dbReference type="GO" id="GO:0042130">
    <property type="term" value="P:negative regulation of T cell proliferation"/>
    <property type="evidence" value="ECO:0007669"/>
    <property type="project" value="TreeGrafter"/>
</dbReference>
<dbReference type="GO" id="GO:0006644">
    <property type="term" value="P:phospholipid metabolic process"/>
    <property type="evidence" value="ECO:0007669"/>
    <property type="project" value="InterPro"/>
</dbReference>
<dbReference type="CDD" id="cd00125">
    <property type="entry name" value="PLA2c"/>
    <property type="match status" value="1"/>
</dbReference>
<dbReference type="FunFam" id="1.20.90.10:FF:000001">
    <property type="entry name" value="Basic phospholipase A2 homolog"/>
    <property type="match status" value="1"/>
</dbReference>
<dbReference type="Gene3D" id="1.20.90.10">
    <property type="entry name" value="Phospholipase A2 domain"/>
    <property type="match status" value="1"/>
</dbReference>
<dbReference type="InterPro" id="IPR001211">
    <property type="entry name" value="PLipase_A2"/>
</dbReference>
<dbReference type="InterPro" id="IPR033112">
    <property type="entry name" value="PLipase_A2_Asp_AS"/>
</dbReference>
<dbReference type="InterPro" id="IPR016090">
    <property type="entry name" value="PLipase_A2_dom"/>
</dbReference>
<dbReference type="InterPro" id="IPR036444">
    <property type="entry name" value="PLipase_A2_dom_sf"/>
</dbReference>
<dbReference type="InterPro" id="IPR033113">
    <property type="entry name" value="PLipase_A2_His_AS"/>
</dbReference>
<dbReference type="PANTHER" id="PTHR11716">
    <property type="entry name" value="PHOSPHOLIPASE A2 FAMILY MEMBER"/>
    <property type="match status" value="1"/>
</dbReference>
<dbReference type="PANTHER" id="PTHR11716:SF9">
    <property type="entry name" value="PHOSPHOLIPASE A2, MEMBRANE ASSOCIATED"/>
    <property type="match status" value="1"/>
</dbReference>
<dbReference type="Pfam" id="PF00068">
    <property type="entry name" value="Phospholip_A2_1"/>
    <property type="match status" value="1"/>
</dbReference>
<dbReference type="PRINTS" id="PR00389">
    <property type="entry name" value="PHPHLIPASEA2"/>
</dbReference>
<dbReference type="SMART" id="SM00085">
    <property type="entry name" value="PA2c"/>
    <property type="match status" value="1"/>
</dbReference>
<dbReference type="SUPFAM" id="SSF48619">
    <property type="entry name" value="Phospholipase A2, PLA2"/>
    <property type="match status" value="1"/>
</dbReference>
<dbReference type="PROSITE" id="PS00119">
    <property type="entry name" value="PA2_ASP"/>
    <property type="match status" value="1"/>
</dbReference>
<dbReference type="PROSITE" id="PS00118">
    <property type="entry name" value="PA2_HIS"/>
    <property type="match status" value="1"/>
</dbReference>
<sequence>MRTLWILAVLLLGVEGNLVQFELLIMKVAKRSGLLSYSAYGCYCGWGGYGRPQDATDRCCFVHDCCYGKVTDCNPKTASYTYSEENGEIVCGGDDPCKKQVCECDRVAAICFRDNIPSYDNKYIQFPAKNCQEKPEPC</sequence>
<accession>Q7ZTA6</accession>
<comment type="function">
    <text evidence="5">Snake venom phospholipase A2 (PLA2) that shows very low inhibition of ADP-induced platelet aggregation in platelet-rich plasma of human, rabbit and guinea pig. PLA2 catalyzes the calcium-dependent hydrolysis of the 2-acyl groups in 3-sn-phosphoglycerides.</text>
</comment>
<comment type="catalytic activity">
    <reaction evidence="3 4">
        <text>a 1,2-diacyl-sn-glycero-3-phosphocholine + H2O = a 1-acyl-sn-glycero-3-phosphocholine + a fatty acid + H(+)</text>
        <dbReference type="Rhea" id="RHEA:15801"/>
        <dbReference type="ChEBI" id="CHEBI:15377"/>
        <dbReference type="ChEBI" id="CHEBI:15378"/>
        <dbReference type="ChEBI" id="CHEBI:28868"/>
        <dbReference type="ChEBI" id="CHEBI:57643"/>
        <dbReference type="ChEBI" id="CHEBI:58168"/>
        <dbReference type="EC" id="3.1.1.4"/>
    </reaction>
</comment>
<comment type="cofactor">
    <cofactor evidence="5">
        <name>Ca(2+)</name>
        <dbReference type="ChEBI" id="CHEBI:29108"/>
    </cofactor>
</comment>
<comment type="subcellular location">
    <subcellularLocation>
        <location>Secreted</location>
    </subcellularLocation>
</comment>
<comment type="tissue specificity">
    <text>Expressed by the venom gland.</text>
</comment>
<comment type="mass spectrometry"/>
<comment type="similarity">
    <text evidence="6">Belongs to the phospholipase A2 family. Group II subfamily. D49 sub-subfamily.</text>
</comment>
<evidence type="ECO:0000250" key="1">
    <source>
        <dbReference type="UniProtKB" id="O42187"/>
    </source>
</evidence>
<evidence type="ECO:0000250" key="2">
    <source>
        <dbReference type="UniProtKB" id="P06859"/>
    </source>
</evidence>
<evidence type="ECO:0000255" key="3">
    <source>
        <dbReference type="PROSITE-ProRule" id="PRU10035"/>
    </source>
</evidence>
<evidence type="ECO:0000255" key="4">
    <source>
        <dbReference type="PROSITE-ProRule" id="PRU10036"/>
    </source>
</evidence>
<evidence type="ECO:0000269" key="5">
    <source>
    </source>
</evidence>
<evidence type="ECO:0000305" key="6"/>
<name>PA2AB_CROVV</name>
<keyword id="KW-0106">Calcium</keyword>
<keyword id="KW-0903">Direct protein sequencing</keyword>
<keyword id="KW-1015">Disulfide bond</keyword>
<keyword id="KW-1199">Hemostasis impairing toxin</keyword>
<keyword id="KW-0378">Hydrolase</keyword>
<keyword id="KW-0442">Lipid degradation</keyword>
<keyword id="KW-0443">Lipid metabolism</keyword>
<keyword id="KW-0479">Metal-binding</keyword>
<keyword id="KW-1201">Platelet aggregation inhibiting toxin</keyword>
<keyword id="KW-0964">Secreted</keyword>
<keyword id="KW-0732">Signal</keyword>
<keyword id="KW-0800">Toxin</keyword>
<organism>
    <name type="scientific">Crotalus viridis viridis</name>
    <name type="common">Prairie rattlesnake</name>
    <dbReference type="NCBI Taxonomy" id="8742"/>
    <lineage>
        <taxon>Eukaryota</taxon>
        <taxon>Metazoa</taxon>
        <taxon>Chordata</taxon>
        <taxon>Craniata</taxon>
        <taxon>Vertebrata</taxon>
        <taxon>Euteleostomi</taxon>
        <taxon>Lepidosauria</taxon>
        <taxon>Squamata</taxon>
        <taxon>Bifurcata</taxon>
        <taxon>Unidentata</taxon>
        <taxon>Episquamata</taxon>
        <taxon>Toxicofera</taxon>
        <taxon>Serpentes</taxon>
        <taxon>Colubroidea</taxon>
        <taxon>Viperidae</taxon>
        <taxon>Crotalinae</taxon>
        <taxon>Crotalus</taxon>
    </lineage>
</organism>
<reference key="1">
    <citation type="journal article" date="2003" name="Arch. Biochem. Biophys.">
        <title>Geographic variations, cloning, and functional analyses of the venom acidic phospholipases A2 of Crotalus viridis viridis.</title>
        <authorList>
            <person name="Tsai I.-H."/>
            <person name="Wang Y.-M."/>
            <person name="Chen Y.-H."/>
            <person name="Tu A.T."/>
        </authorList>
    </citation>
    <scope>NUCLEOTIDE SEQUENCE [MRNA]</scope>
    <scope>PROTEIN SEQUENCE OF 17-39</scope>
    <scope>FUNCTION</scope>
    <scope>COFACTOR</scope>
    <scope>MASS SPECTROMETRY</scope>
    <source>
        <strain>Colorado</strain>
        <strain>Wyoming</strain>
        <tissue>Venom</tissue>
        <tissue>Venom gland</tissue>
    </source>
</reference>
<protein>
    <recommendedName>
        <fullName>Acidic phospholipase A2 Cvv-E6b</fullName>
        <shortName>svPLA2</shortName>
        <ecNumber>3.1.1.4</ecNumber>
    </recommendedName>
    <alternativeName>
        <fullName>Phosphatidylcholine 2-acylhydrolase</fullName>
    </alternativeName>
</protein>